<name>LPXA_ERWT9</name>
<reference key="1">
    <citation type="journal article" date="2008" name="Environ. Microbiol.">
        <title>The genome of Erwinia tasmaniensis strain Et1/99, a non-pathogenic bacterium in the genus Erwinia.</title>
        <authorList>
            <person name="Kube M."/>
            <person name="Migdoll A.M."/>
            <person name="Mueller I."/>
            <person name="Kuhl H."/>
            <person name="Beck A."/>
            <person name="Reinhardt R."/>
            <person name="Geider K."/>
        </authorList>
    </citation>
    <scope>NUCLEOTIDE SEQUENCE [LARGE SCALE GENOMIC DNA]</scope>
    <source>
        <strain>DSM 17950 / CFBP 7177 / CIP 109463 / NCPPB 4357 / Et1/99</strain>
    </source>
</reference>
<comment type="function">
    <text evidence="1">Involved in the biosynthesis of lipid A, a phosphorylated glycolipid that anchors the lipopolysaccharide to the outer membrane of the cell.</text>
</comment>
<comment type="catalytic activity">
    <reaction evidence="1">
        <text>a (3R)-hydroxyacyl-[ACP] + UDP-N-acetyl-alpha-D-glucosamine = a UDP-3-O-[(3R)-3-hydroxyacyl]-N-acetyl-alpha-D-glucosamine + holo-[ACP]</text>
        <dbReference type="Rhea" id="RHEA:67812"/>
        <dbReference type="Rhea" id="RHEA-COMP:9685"/>
        <dbReference type="Rhea" id="RHEA-COMP:9945"/>
        <dbReference type="ChEBI" id="CHEBI:57705"/>
        <dbReference type="ChEBI" id="CHEBI:64479"/>
        <dbReference type="ChEBI" id="CHEBI:78827"/>
        <dbReference type="ChEBI" id="CHEBI:173225"/>
        <dbReference type="EC" id="2.3.1.129"/>
    </reaction>
</comment>
<comment type="pathway">
    <text evidence="1">Glycolipid biosynthesis; lipid IV(A) biosynthesis; lipid IV(A) from (3R)-3-hydroxytetradecanoyl-[acyl-carrier-protein] and UDP-N-acetyl-alpha-D-glucosamine: step 1/6.</text>
</comment>
<comment type="subunit">
    <text evidence="1">Homotrimer.</text>
</comment>
<comment type="subcellular location">
    <subcellularLocation>
        <location evidence="1">Cytoplasm</location>
    </subcellularLocation>
</comment>
<comment type="similarity">
    <text evidence="1">Belongs to the transferase hexapeptide repeat family. LpxA subfamily.</text>
</comment>
<gene>
    <name evidence="1" type="primary">lpxA</name>
    <name type="ordered locus">ETA_09020</name>
</gene>
<keyword id="KW-0012">Acyltransferase</keyword>
<keyword id="KW-0963">Cytoplasm</keyword>
<keyword id="KW-0441">Lipid A biosynthesis</keyword>
<keyword id="KW-0444">Lipid biosynthesis</keyword>
<keyword id="KW-0443">Lipid metabolism</keyword>
<keyword id="KW-1185">Reference proteome</keyword>
<keyword id="KW-0677">Repeat</keyword>
<keyword id="KW-0808">Transferase</keyword>
<dbReference type="EC" id="2.3.1.129" evidence="1"/>
<dbReference type="EMBL" id="CU468135">
    <property type="protein sequence ID" value="CAO95948.1"/>
    <property type="molecule type" value="Genomic_DNA"/>
</dbReference>
<dbReference type="RefSeq" id="WP_012440650.1">
    <property type="nucleotide sequence ID" value="NC_010694.1"/>
</dbReference>
<dbReference type="SMR" id="B2VHX8"/>
<dbReference type="STRING" id="465817.ETA_09020"/>
<dbReference type="KEGG" id="eta:ETA_09020"/>
<dbReference type="eggNOG" id="COG1043">
    <property type="taxonomic scope" value="Bacteria"/>
</dbReference>
<dbReference type="HOGENOM" id="CLU_061249_0_0_6"/>
<dbReference type="OrthoDB" id="9807278at2"/>
<dbReference type="UniPathway" id="UPA00359">
    <property type="reaction ID" value="UER00477"/>
</dbReference>
<dbReference type="Proteomes" id="UP000001726">
    <property type="component" value="Chromosome"/>
</dbReference>
<dbReference type="GO" id="GO:0005737">
    <property type="term" value="C:cytoplasm"/>
    <property type="evidence" value="ECO:0007669"/>
    <property type="project" value="UniProtKB-SubCell"/>
</dbReference>
<dbReference type="GO" id="GO:0016020">
    <property type="term" value="C:membrane"/>
    <property type="evidence" value="ECO:0007669"/>
    <property type="project" value="GOC"/>
</dbReference>
<dbReference type="GO" id="GO:0008780">
    <property type="term" value="F:acyl-[acyl-carrier-protein]-UDP-N-acetylglucosamine O-acyltransferase activity"/>
    <property type="evidence" value="ECO:0007669"/>
    <property type="project" value="UniProtKB-UniRule"/>
</dbReference>
<dbReference type="GO" id="GO:0009245">
    <property type="term" value="P:lipid A biosynthetic process"/>
    <property type="evidence" value="ECO:0007669"/>
    <property type="project" value="UniProtKB-UniRule"/>
</dbReference>
<dbReference type="CDD" id="cd03351">
    <property type="entry name" value="LbH_UDP-GlcNAc_AT"/>
    <property type="match status" value="1"/>
</dbReference>
<dbReference type="FunFam" id="2.160.10.10:FF:000003">
    <property type="entry name" value="Acyl-[acyl-carrier-protein]--UDP-N-acetylglucosamine O-acyltransferase"/>
    <property type="match status" value="1"/>
</dbReference>
<dbReference type="Gene3D" id="2.160.10.10">
    <property type="entry name" value="Hexapeptide repeat proteins"/>
    <property type="match status" value="1"/>
</dbReference>
<dbReference type="Gene3D" id="1.20.1180.10">
    <property type="entry name" value="Udp N-acetylglucosamine O-acyltransferase, C-terminal domain"/>
    <property type="match status" value="1"/>
</dbReference>
<dbReference type="HAMAP" id="MF_00387">
    <property type="entry name" value="LpxA"/>
    <property type="match status" value="1"/>
</dbReference>
<dbReference type="InterPro" id="IPR029098">
    <property type="entry name" value="Acetyltransf_C"/>
</dbReference>
<dbReference type="InterPro" id="IPR037157">
    <property type="entry name" value="Acetyltransf_C_sf"/>
</dbReference>
<dbReference type="InterPro" id="IPR001451">
    <property type="entry name" value="Hexapep"/>
</dbReference>
<dbReference type="InterPro" id="IPR018357">
    <property type="entry name" value="Hexapep_transf_CS"/>
</dbReference>
<dbReference type="InterPro" id="IPR010137">
    <property type="entry name" value="Lipid_A_LpxA"/>
</dbReference>
<dbReference type="InterPro" id="IPR011004">
    <property type="entry name" value="Trimer_LpxA-like_sf"/>
</dbReference>
<dbReference type="NCBIfam" id="TIGR01852">
    <property type="entry name" value="lipid_A_lpxA"/>
    <property type="match status" value="1"/>
</dbReference>
<dbReference type="NCBIfam" id="NF003657">
    <property type="entry name" value="PRK05289.1"/>
    <property type="match status" value="1"/>
</dbReference>
<dbReference type="PANTHER" id="PTHR43480">
    <property type="entry name" value="ACYL-[ACYL-CARRIER-PROTEIN]--UDP-N-ACETYLGLUCOSAMINE O-ACYLTRANSFERASE"/>
    <property type="match status" value="1"/>
</dbReference>
<dbReference type="PANTHER" id="PTHR43480:SF1">
    <property type="entry name" value="ACYL-[ACYL-CARRIER-PROTEIN]--UDP-N-ACETYLGLUCOSAMINE O-ACYLTRANSFERASE, MITOCHONDRIAL-RELATED"/>
    <property type="match status" value="1"/>
</dbReference>
<dbReference type="Pfam" id="PF13720">
    <property type="entry name" value="Acetyltransf_11"/>
    <property type="match status" value="1"/>
</dbReference>
<dbReference type="Pfam" id="PF00132">
    <property type="entry name" value="Hexapep"/>
    <property type="match status" value="2"/>
</dbReference>
<dbReference type="PIRSF" id="PIRSF000456">
    <property type="entry name" value="UDP-GlcNAc_acltr"/>
    <property type="match status" value="1"/>
</dbReference>
<dbReference type="SUPFAM" id="SSF51161">
    <property type="entry name" value="Trimeric LpxA-like enzymes"/>
    <property type="match status" value="1"/>
</dbReference>
<dbReference type="PROSITE" id="PS00101">
    <property type="entry name" value="HEXAPEP_TRANSFERASES"/>
    <property type="match status" value="2"/>
</dbReference>
<proteinExistence type="inferred from homology"/>
<organism>
    <name type="scientific">Erwinia tasmaniensis (strain DSM 17950 / CFBP 7177 / CIP 109463 / NCPPB 4357 / Et1/99)</name>
    <dbReference type="NCBI Taxonomy" id="465817"/>
    <lineage>
        <taxon>Bacteria</taxon>
        <taxon>Pseudomonadati</taxon>
        <taxon>Pseudomonadota</taxon>
        <taxon>Gammaproteobacteria</taxon>
        <taxon>Enterobacterales</taxon>
        <taxon>Erwiniaceae</taxon>
        <taxon>Erwinia</taxon>
    </lineage>
</organism>
<protein>
    <recommendedName>
        <fullName evidence="1">Acyl-[acyl-carrier-protein]--UDP-N-acetylglucosamine O-acyltransferase</fullName>
        <shortName evidence="1">UDP-N-acetylglucosamine acyltransferase</shortName>
        <ecNumber evidence="1">2.3.1.129</ecNumber>
    </recommendedName>
</protein>
<evidence type="ECO:0000255" key="1">
    <source>
        <dbReference type="HAMAP-Rule" id="MF_00387"/>
    </source>
</evidence>
<sequence length="262" mass="27941">MIDSTAVIHPTSIVEDGAVIGAGVQIGPFCVIGANVSIGEGTTLKSHIVVNGHTRIGKDNTVYQFASIGEANQDLKYAGEPTRVEIGDRNRIRESVTIHRGTVQSDGVTRVGDDNLLMVNAHVAHDCVVGNHCILANNATLAGHVIVDDYAIIGGMTAVHQFCTIGAHVMVGGCSGVAQDVPPYVIAQGNHATPFGINLIGLQRRGFSKEALHAIRAAYKLLYRSGKTLDEVKPEIADIAQAHPEVQPFYDFFARSTRGLIR</sequence>
<accession>B2VHX8</accession>
<feature type="chain" id="PRO_1000122708" description="Acyl-[acyl-carrier-protein]--UDP-N-acetylglucosamine O-acyltransferase">
    <location>
        <begin position="1"/>
        <end position="262"/>
    </location>
</feature>